<name>TX1B3_MOUSE</name>
<evidence type="ECO:0000250" key="1"/>
<evidence type="ECO:0000250" key="2">
    <source>
        <dbReference type="UniProtKB" id="O14907"/>
    </source>
</evidence>
<evidence type="ECO:0000255" key="3">
    <source>
        <dbReference type="PROSITE-ProRule" id="PRU00143"/>
    </source>
</evidence>
<evidence type="ECO:0000269" key="4">
    <source>
    </source>
</evidence>
<evidence type="ECO:0000269" key="5">
    <source>
    </source>
</evidence>
<evidence type="ECO:0000305" key="6"/>
<evidence type="ECO:0000312" key="7">
    <source>
        <dbReference type="EMBL" id="AAH08166.1"/>
    </source>
</evidence>
<evidence type="ECO:0000312" key="8">
    <source>
        <dbReference type="EMBL" id="AAH94314.1"/>
    </source>
</evidence>
<evidence type="ECO:0000312" key="9">
    <source>
        <dbReference type="EMBL" id="BAB23703.1"/>
    </source>
</evidence>
<evidence type="ECO:0000312" key="10">
    <source>
        <dbReference type="EMBL" id="BAE29879.1"/>
    </source>
</evidence>
<evidence type="ECO:0000312" key="11">
    <source>
        <dbReference type="EMBL" id="BAE40411.1"/>
    </source>
</evidence>
<evidence type="ECO:0000312" key="12">
    <source>
        <dbReference type="EMBL" id="BAE41827.1"/>
    </source>
</evidence>
<evidence type="ECO:0000312" key="13">
    <source>
        <dbReference type="MGI" id="MGI:1923531"/>
    </source>
</evidence>
<evidence type="ECO:0007829" key="14">
    <source>
        <dbReference type="PDB" id="3DJ1"/>
    </source>
</evidence>
<evidence type="ECO:0007829" key="15">
    <source>
        <dbReference type="PDB" id="3DJ3"/>
    </source>
</evidence>
<protein>
    <recommendedName>
        <fullName>Tax1-binding protein 3</fullName>
    </recommendedName>
    <alternativeName>
        <fullName>Tax interaction protein 1</fullName>
        <shortName>TIP-1</shortName>
    </alternativeName>
</protein>
<proteinExistence type="evidence at protein level"/>
<dbReference type="EMBL" id="AK004963">
    <property type="protein sequence ID" value="BAB23703.1"/>
    <property type="molecule type" value="mRNA"/>
</dbReference>
<dbReference type="EMBL" id="AK150816">
    <property type="protein sequence ID" value="BAE29879.1"/>
    <property type="molecule type" value="mRNA"/>
</dbReference>
<dbReference type="EMBL" id="AK168533">
    <property type="protein sequence ID" value="BAE40411.1"/>
    <property type="molecule type" value="mRNA"/>
</dbReference>
<dbReference type="EMBL" id="AK170485">
    <property type="protein sequence ID" value="BAE41827.1"/>
    <property type="molecule type" value="mRNA"/>
</dbReference>
<dbReference type="EMBL" id="AL670399">
    <property type="status" value="NOT_ANNOTATED_CDS"/>
    <property type="molecule type" value="Genomic_DNA"/>
</dbReference>
<dbReference type="EMBL" id="BC008166">
    <property type="protein sequence ID" value="AAH08166.1"/>
    <property type="molecule type" value="mRNA"/>
</dbReference>
<dbReference type="EMBL" id="BC094314">
    <property type="protein sequence ID" value="AAH94314.1"/>
    <property type="molecule type" value="mRNA"/>
</dbReference>
<dbReference type="CCDS" id="CCDS25000.1"/>
<dbReference type="RefSeq" id="NP_083840.1">
    <property type="nucleotide sequence ID" value="NM_029564.2"/>
</dbReference>
<dbReference type="PDB" id="3DIW">
    <property type="method" value="X-ray"/>
    <property type="resolution" value="2.10 A"/>
    <property type="chains" value="A/B=1-124"/>
</dbReference>
<dbReference type="PDB" id="3DJ1">
    <property type="method" value="X-ray"/>
    <property type="resolution" value="1.80 A"/>
    <property type="chains" value="A/B=1-124"/>
</dbReference>
<dbReference type="PDB" id="3DJ3">
    <property type="method" value="X-ray"/>
    <property type="resolution" value="2.40 A"/>
    <property type="chains" value="A/B/C/D=1-112"/>
</dbReference>
<dbReference type="PDBsum" id="3DIW"/>
<dbReference type="PDBsum" id="3DJ1"/>
<dbReference type="PDBsum" id="3DJ3"/>
<dbReference type="BMRB" id="Q9DBG9"/>
<dbReference type="SMR" id="Q9DBG9"/>
<dbReference type="BioGRID" id="218059">
    <property type="interactions" value="5"/>
</dbReference>
<dbReference type="ELM" id="Q9DBG9"/>
<dbReference type="FunCoup" id="Q9DBG9">
    <property type="interactions" value="3049"/>
</dbReference>
<dbReference type="IntAct" id="Q9DBG9">
    <property type="interactions" value="4"/>
</dbReference>
<dbReference type="STRING" id="10090.ENSMUSP00000047410"/>
<dbReference type="GlyGen" id="Q9DBG9">
    <property type="glycosylation" value="1 site, 1 O-linked glycan (1 site)"/>
</dbReference>
<dbReference type="iPTMnet" id="Q9DBG9"/>
<dbReference type="PhosphoSitePlus" id="Q9DBG9"/>
<dbReference type="PaxDb" id="10090-ENSMUSP00000047410"/>
<dbReference type="PeptideAtlas" id="Q9DBG9"/>
<dbReference type="ProteomicsDB" id="298070"/>
<dbReference type="Pumba" id="Q9DBG9"/>
<dbReference type="Antibodypedia" id="23095">
    <property type="antibodies" value="137 antibodies from 26 providers"/>
</dbReference>
<dbReference type="DNASU" id="76281"/>
<dbReference type="Ensembl" id="ENSMUST00000040687.12">
    <property type="protein sequence ID" value="ENSMUSP00000047410.6"/>
    <property type="gene ID" value="ENSMUSG00000040158.13"/>
</dbReference>
<dbReference type="GeneID" id="76281"/>
<dbReference type="KEGG" id="mmu:76281"/>
<dbReference type="UCSC" id="uc007kac.1">
    <property type="organism name" value="mouse"/>
</dbReference>
<dbReference type="AGR" id="MGI:1923531"/>
<dbReference type="CTD" id="30851"/>
<dbReference type="MGI" id="MGI:1923531">
    <property type="gene designation" value="Tax1bp3"/>
</dbReference>
<dbReference type="VEuPathDB" id="HostDB:ENSMUSG00000040158"/>
<dbReference type="eggNOG" id="KOG3553">
    <property type="taxonomic scope" value="Eukaryota"/>
</dbReference>
<dbReference type="GeneTree" id="ENSGT00390000002877"/>
<dbReference type="HOGENOM" id="CLU_130477_0_0_1"/>
<dbReference type="InParanoid" id="Q9DBG9"/>
<dbReference type="OMA" id="NDFTMVT"/>
<dbReference type="OrthoDB" id="10033291at2759"/>
<dbReference type="PhylomeDB" id="Q9DBG9"/>
<dbReference type="TreeFam" id="TF318964"/>
<dbReference type="Reactome" id="R-MMU-5666185">
    <property type="pathway name" value="RHO GTPases Activate Rhotekin and Rhophilins"/>
</dbReference>
<dbReference type="BioGRID-ORCS" id="76281">
    <property type="hits" value="3 hits in 76 CRISPR screens"/>
</dbReference>
<dbReference type="ChiTaRS" id="Tax1bp3">
    <property type="organism name" value="mouse"/>
</dbReference>
<dbReference type="EvolutionaryTrace" id="Q9DBG9"/>
<dbReference type="PRO" id="PR:Q9DBG9"/>
<dbReference type="Proteomes" id="UP000000589">
    <property type="component" value="Chromosome 11"/>
</dbReference>
<dbReference type="RNAct" id="Q9DBG9">
    <property type="molecule type" value="protein"/>
</dbReference>
<dbReference type="Bgee" id="ENSMUSG00000040158">
    <property type="expression patterns" value="Expressed in ileum and 65 other cell types or tissues"/>
</dbReference>
<dbReference type="ExpressionAtlas" id="Q9DBG9">
    <property type="expression patterns" value="baseline and differential"/>
</dbReference>
<dbReference type="GO" id="GO:0015629">
    <property type="term" value="C:actin cytoskeleton"/>
    <property type="evidence" value="ECO:0007669"/>
    <property type="project" value="Ensembl"/>
</dbReference>
<dbReference type="GO" id="GO:0005737">
    <property type="term" value="C:cytoplasm"/>
    <property type="evidence" value="ECO:0000314"/>
    <property type="project" value="MGI"/>
</dbReference>
<dbReference type="GO" id="GO:0001650">
    <property type="term" value="C:fibrillar center"/>
    <property type="evidence" value="ECO:0007669"/>
    <property type="project" value="Ensembl"/>
</dbReference>
<dbReference type="GO" id="GO:0005634">
    <property type="term" value="C:nucleus"/>
    <property type="evidence" value="ECO:0000314"/>
    <property type="project" value="MGI"/>
</dbReference>
<dbReference type="GO" id="GO:0005886">
    <property type="term" value="C:plasma membrane"/>
    <property type="evidence" value="ECO:0007669"/>
    <property type="project" value="UniProtKB-SubCell"/>
</dbReference>
<dbReference type="GO" id="GO:0008013">
    <property type="term" value="F:beta-catenin binding"/>
    <property type="evidence" value="ECO:0000353"/>
    <property type="project" value="MGI"/>
</dbReference>
<dbReference type="GO" id="GO:0008285">
    <property type="term" value="P:negative regulation of cell population proliferation"/>
    <property type="evidence" value="ECO:0000314"/>
    <property type="project" value="MGI"/>
</dbReference>
<dbReference type="GO" id="GO:2000009">
    <property type="term" value="P:negative regulation of protein localization to cell surface"/>
    <property type="evidence" value="ECO:0000250"/>
    <property type="project" value="UniProtKB"/>
</dbReference>
<dbReference type="GO" id="GO:0030178">
    <property type="term" value="P:negative regulation of Wnt signaling pathway"/>
    <property type="evidence" value="ECO:0000314"/>
    <property type="project" value="UniProtKB"/>
</dbReference>
<dbReference type="GO" id="GO:0007266">
    <property type="term" value="P:Rho protein signal transduction"/>
    <property type="evidence" value="ECO:0000250"/>
    <property type="project" value="UniProtKB"/>
</dbReference>
<dbReference type="GO" id="GO:0016055">
    <property type="term" value="P:Wnt signaling pathway"/>
    <property type="evidence" value="ECO:0007669"/>
    <property type="project" value="UniProtKB-KW"/>
</dbReference>
<dbReference type="CDD" id="cd10822">
    <property type="entry name" value="PDZ_TAX1BP3-like"/>
    <property type="match status" value="1"/>
</dbReference>
<dbReference type="FunFam" id="2.30.42.10:FF:000121">
    <property type="entry name" value="Tax1-binding protein 3"/>
    <property type="match status" value="1"/>
</dbReference>
<dbReference type="Gene3D" id="2.30.42.10">
    <property type="match status" value="1"/>
</dbReference>
<dbReference type="IDEAL" id="IID50015"/>
<dbReference type="InterPro" id="IPR001478">
    <property type="entry name" value="PDZ"/>
</dbReference>
<dbReference type="InterPro" id="IPR036034">
    <property type="entry name" value="PDZ_sf"/>
</dbReference>
<dbReference type="InterPro" id="IPR050614">
    <property type="entry name" value="Synaptic_Scaffolding_LAP-MAGUK"/>
</dbReference>
<dbReference type="InterPro" id="IPR017268">
    <property type="entry name" value="Tax1-binding_p3"/>
</dbReference>
<dbReference type="PANTHER" id="PTHR23119">
    <property type="entry name" value="DISCS LARGE"/>
    <property type="match status" value="1"/>
</dbReference>
<dbReference type="PANTHER" id="PTHR23119:SF50">
    <property type="entry name" value="PDZ DOMAIN-CONTAINING PROTEIN"/>
    <property type="match status" value="1"/>
</dbReference>
<dbReference type="Pfam" id="PF00595">
    <property type="entry name" value="PDZ"/>
    <property type="match status" value="1"/>
</dbReference>
<dbReference type="PIRSF" id="PIRSF037712">
    <property type="entry name" value="Tax1-binding_p3"/>
    <property type="match status" value="1"/>
</dbReference>
<dbReference type="SMART" id="SM00228">
    <property type="entry name" value="PDZ"/>
    <property type="match status" value="1"/>
</dbReference>
<dbReference type="SUPFAM" id="SSF50156">
    <property type="entry name" value="PDZ domain-like"/>
    <property type="match status" value="1"/>
</dbReference>
<dbReference type="PROSITE" id="PS50106">
    <property type="entry name" value="PDZ"/>
    <property type="match status" value="1"/>
</dbReference>
<sequence>MSYTPGQPVTAVVQRVEIHKLRQGENLILGFSIGGGIDQDPSQNPFSEDKTDKGIYVTRVSEGGPAEIAGLQIGDKIMQVNGWDMTMVTHDQARKRLTKRSEEVVRLLVTRQSLQKAVQQSMLS</sequence>
<reference evidence="9" key="1">
    <citation type="journal article" date="2005" name="Science">
        <title>The transcriptional landscape of the mammalian genome.</title>
        <authorList>
            <person name="Carninci P."/>
            <person name="Kasukawa T."/>
            <person name="Katayama S."/>
            <person name="Gough J."/>
            <person name="Frith M.C."/>
            <person name="Maeda N."/>
            <person name="Oyama R."/>
            <person name="Ravasi T."/>
            <person name="Lenhard B."/>
            <person name="Wells C."/>
            <person name="Kodzius R."/>
            <person name="Shimokawa K."/>
            <person name="Bajic V.B."/>
            <person name="Brenner S.E."/>
            <person name="Batalov S."/>
            <person name="Forrest A.R."/>
            <person name="Zavolan M."/>
            <person name="Davis M.J."/>
            <person name="Wilming L.G."/>
            <person name="Aidinis V."/>
            <person name="Allen J.E."/>
            <person name="Ambesi-Impiombato A."/>
            <person name="Apweiler R."/>
            <person name="Aturaliya R.N."/>
            <person name="Bailey T.L."/>
            <person name="Bansal M."/>
            <person name="Baxter L."/>
            <person name="Beisel K.W."/>
            <person name="Bersano T."/>
            <person name="Bono H."/>
            <person name="Chalk A.M."/>
            <person name="Chiu K.P."/>
            <person name="Choudhary V."/>
            <person name="Christoffels A."/>
            <person name="Clutterbuck D.R."/>
            <person name="Crowe M.L."/>
            <person name="Dalla E."/>
            <person name="Dalrymple B.P."/>
            <person name="de Bono B."/>
            <person name="Della Gatta G."/>
            <person name="di Bernardo D."/>
            <person name="Down T."/>
            <person name="Engstrom P."/>
            <person name="Fagiolini M."/>
            <person name="Faulkner G."/>
            <person name="Fletcher C.F."/>
            <person name="Fukushima T."/>
            <person name="Furuno M."/>
            <person name="Futaki S."/>
            <person name="Gariboldi M."/>
            <person name="Georgii-Hemming P."/>
            <person name="Gingeras T.R."/>
            <person name="Gojobori T."/>
            <person name="Green R.E."/>
            <person name="Gustincich S."/>
            <person name="Harbers M."/>
            <person name="Hayashi Y."/>
            <person name="Hensch T.K."/>
            <person name="Hirokawa N."/>
            <person name="Hill D."/>
            <person name="Huminiecki L."/>
            <person name="Iacono M."/>
            <person name="Ikeo K."/>
            <person name="Iwama A."/>
            <person name="Ishikawa T."/>
            <person name="Jakt M."/>
            <person name="Kanapin A."/>
            <person name="Katoh M."/>
            <person name="Kawasawa Y."/>
            <person name="Kelso J."/>
            <person name="Kitamura H."/>
            <person name="Kitano H."/>
            <person name="Kollias G."/>
            <person name="Krishnan S.P."/>
            <person name="Kruger A."/>
            <person name="Kummerfeld S.K."/>
            <person name="Kurochkin I.V."/>
            <person name="Lareau L.F."/>
            <person name="Lazarevic D."/>
            <person name="Lipovich L."/>
            <person name="Liu J."/>
            <person name="Liuni S."/>
            <person name="McWilliam S."/>
            <person name="Madan Babu M."/>
            <person name="Madera M."/>
            <person name="Marchionni L."/>
            <person name="Matsuda H."/>
            <person name="Matsuzawa S."/>
            <person name="Miki H."/>
            <person name="Mignone F."/>
            <person name="Miyake S."/>
            <person name="Morris K."/>
            <person name="Mottagui-Tabar S."/>
            <person name="Mulder N."/>
            <person name="Nakano N."/>
            <person name="Nakauchi H."/>
            <person name="Ng P."/>
            <person name="Nilsson R."/>
            <person name="Nishiguchi S."/>
            <person name="Nishikawa S."/>
            <person name="Nori F."/>
            <person name="Ohara O."/>
            <person name="Okazaki Y."/>
            <person name="Orlando V."/>
            <person name="Pang K.C."/>
            <person name="Pavan W.J."/>
            <person name="Pavesi G."/>
            <person name="Pesole G."/>
            <person name="Petrovsky N."/>
            <person name="Piazza S."/>
            <person name="Reed J."/>
            <person name="Reid J.F."/>
            <person name="Ring B.Z."/>
            <person name="Ringwald M."/>
            <person name="Rost B."/>
            <person name="Ruan Y."/>
            <person name="Salzberg S.L."/>
            <person name="Sandelin A."/>
            <person name="Schneider C."/>
            <person name="Schoenbach C."/>
            <person name="Sekiguchi K."/>
            <person name="Semple C.A."/>
            <person name="Seno S."/>
            <person name="Sessa L."/>
            <person name="Sheng Y."/>
            <person name="Shibata Y."/>
            <person name="Shimada H."/>
            <person name="Shimada K."/>
            <person name="Silva D."/>
            <person name="Sinclair B."/>
            <person name="Sperling S."/>
            <person name="Stupka E."/>
            <person name="Sugiura K."/>
            <person name="Sultana R."/>
            <person name="Takenaka Y."/>
            <person name="Taki K."/>
            <person name="Tammoja K."/>
            <person name="Tan S.L."/>
            <person name="Tang S."/>
            <person name="Taylor M.S."/>
            <person name="Tegner J."/>
            <person name="Teichmann S.A."/>
            <person name="Ueda H.R."/>
            <person name="van Nimwegen E."/>
            <person name="Verardo R."/>
            <person name="Wei C.L."/>
            <person name="Yagi K."/>
            <person name="Yamanishi H."/>
            <person name="Zabarovsky E."/>
            <person name="Zhu S."/>
            <person name="Zimmer A."/>
            <person name="Hide W."/>
            <person name="Bult C."/>
            <person name="Grimmond S.M."/>
            <person name="Teasdale R.D."/>
            <person name="Liu E.T."/>
            <person name="Brusic V."/>
            <person name="Quackenbush J."/>
            <person name="Wahlestedt C."/>
            <person name="Mattick J.S."/>
            <person name="Hume D.A."/>
            <person name="Kai C."/>
            <person name="Sasaki D."/>
            <person name="Tomaru Y."/>
            <person name="Fukuda S."/>
            <person name="Kanamori-Katayama M."/>
            <person name="Suzuki M."/>
            <person name="Aoki J."/>
            <person name="Arakawa T."/>
            <person name="Iida J."/>
            <person name="Imamura K."/>
            <person name="Itoh M."/>
            <person name="Kato T."/>
            <person name="Kawaji H."/>
            <person name="Kawagashira N."/>
            <person name="Kawashima T."/>
            <person name="Kojima M."/>
            <person name="Kondo S."/>
            <person name="Konno H."/>
            <person name="Nakano K."/>
            <person name="Ninomiya N."/>
            <person name="Nishio T."/>
            <person name="Okada M."/>
            <person name="Plessy C."/>
            <person name="Shibata K."/>
            <person name="Shiraki T."/>
            <person name="Suzuki S."/>
            <person name="Tagami M."/>
            <person name="Waki K."/>
            <person name="Watahiki A."/>
            <person name="Okamura-Oho Y."/>
            <person name="Suzuki H."/>
            <person name="Kawai J."/>
            <person name="Hayashizaki Y."/>
        </authorList>
    </citation>
    <scope>NUCLEOTIDE SEQUENCE [LARGE SCALE MRNA]</scope>
    <source>
        <strain evidence="9">C57BL/6J</strain>
        <strain evidence="12">NOD</strain>
        <tissue evidence="10">Bone marrow</tissue>
        <tissue evidence="11">Heart</tissue>
        <tissue evidence="9">Liver</tissue>
    </source>
</reference>
<reference key="2">
    <citation type="journal article" date="2009" name="PLoS Biol.">
        <title>Lineage-specific biology revealed by a finished genome assembly of the mouse.</title>
        <authorList>
            <person name="Church D.M."/>
            <person name="Goodstadt L."/>
            <person name="Hillier L.W."/>
            <person name="Zody M.C."/>
            <person name="Goldstein S."/>
            <person name="She X."/>
            <person name="Bult C.J."/>
            <person name="Agarwala R."/>
            <person name="Cherry J.L."/>
            <person name="DiCuccio M."/>
            <person name="Hlavina W."/>
            <person name="Kapustin Y."/>
            <person name="Meric P."/>
            <person name="Maglott D."/>
            <person name="Birtle Z."/>
            <person name="Marques A.C."/>
            <person name="Graves T."/>
            <person name="Zhou S."/>
            <person name="Teague B."/>
            <person name="Potamousis K."/>
            <person name="Churas C."/>
            <person name="Place M."/>
            <person name="Herschleb J."/>
            <person name="Runnheim R."/>
            <person name="Forrest D."/>
            <person name="Amos-Landgraf J."/>
            <person name="Schwartz D.C."/>
            <person name="Cheng Z."/>
            <person name="Lindblad-Toh K."/>
            <person name="Eichler E.E."/>
            <person name="Ponting C.P."/>
        </authorList>
    </citation>
    <scope>NUCLEOTIDE SEQUENCE [LARGE SCALE GENOMIC DNA]</scope>
    <source>
        <strain>C57BL/6J</strain>
    </source>
</reference>
<reference evidence="7" key="3">
    <citation type="journal article" date="2004" name="Genome Res.">
        <title>The status, quality, and expansion of the NIH full-length cDNA project: the Mammalian Gene Collection (MGC).</title>
        <authorList>
            <consortium name="The MGC Project Team"/>
        </authorList>
    </citation>
    <scope>NUCLEOTIDE SEQUENCE [LARGE SCALE MRNA]</scope>
    <source>
        <strain evidence="8">C57BL/6J</strain>
        <strain evidence="7">NMRI</strain>
        <tissue evidence="8">Brain</tissue>
        <tissue evidence="7">Mammary gland</tissue>
    </source>
</reference>
<reference evidence="6" key="4">
    <citation type="journal article" date="2003" name="J. Biol. Chem.">
        <title>The PDZ protein tax-interacting protein-1 inhibits beta-catenin transcriptional activity and growth of colorectal cancer cells.</title>
        <authorList>
            <person name="Kanamori M."/>
            <person name="Sandy P."/>
            <person name="Marzinotto S."/>
            <person name="Benetti R."/>
            <person name="Kai C."/>
            <person name="Hayashizaki Y."/>
            <person name="Schneider C."/>
            <person name="Suzuki H."/>
        </authorList>
    </citation>
    <scope>FUNCTION</scope>
    <scope>INTERACTION WITH CTNNB1</scope>
    <scope>SUBCELLULAR LOCATION</scope>
</reference>
<reference key="5">
    <citation type="journal article" date="2010" name="Cell">
        <title>A tissue-specific atlas of mouse protein phosphorylation and expression.</title>
        <authorList>
            <person name="Huttlin E.L."/>
            <person name="Jedrychowski M.P."/>
            <person name="Elias J.E."/>
            <person name="Goswami T."/>
            <person name="Rad R."/>
            <person name="Beausoleil S.A."/>
            <person name="Villen J."/>
            <person name="Haas W."/>
            <person name="Sowa M.E."/>
            <person name="Gygi S.P."/>
        </authorList>
    </citation>
    <scope>IDENTIFICATION BY MASS SPECTROMETRY [LARGE SCALE ANALYSIS]</scope>
    <source>
        <tissue>Brain</tissue>
        <tissue>Brown adipose tissue</tissue>
        <tissue>Heart</tissue>
        <tissue>Kidney</tissue>
        <tissue>Liver</tissue>
        <tissue>Lung</tissue>
        <tissue>Pancreas</tissue>
        <tissue>Spleen</tissue>
        <tissue>Testis</tissue>
    </source>
</reference>
<reference key="6">
    <citation type="journal article" date="2008" name="J. Mol. Biol.">
        <title>Structural basis of beta-catenin recognition by Tax-interacting protein-1.</title>
        <authorList>
            <person name="Zhang J."/>
            <person name="Yan X."/>
            <person name="Shi C."/>
            <person name="Yang X."/>
            <person name="Guo Y."/>
            <person name="Tian C."/>
            <person name="Long J."/>
            <person name="Shen Y."/>
        </authorList>
    </citation>
    <scope>X-RAY CRYSTALLOGRAPHY (1.80 ANGSTROMS) IN COMPLEX WITH CTNNB1</scope>
    <scope>INTERACTION WITH CTNNB1</scope>
</reference>
<keyword id="KW-0002">3D-structure</keyword>
<keyword id="KW-0007">Acetylation</keyword>
<keyword id="KW-1003">Cell membrane</keyword>
<keyword id="KW-0963">Cytoplasm</keyword>
<keyword id="KW-0472">Membrane</keyword>
<keyword id="KW-0539">Nucleus</keyword>
<keyword id="KW-0597">Phosphoprotein</keyword>
<keyword id="KW-1185">Reference proteome</keyword>
<keyword id="KW-0879">Wnt signaling pathway</keyword>
<accession>Q9DBG9</accession>
<organism>
    <name type="scientific">Mus musculus</name>
    <name type="common">Mouse</name>
    <dbReference type="NCBI Taxonomy" id="10090"/>
    <lineage>
        <taxon>Eukaryota</taxon>
        <taxon>Metazoa</taxon>
        <taxon>Chordata</taxon>
        <taxon>Craniata</taxon>
        <taxon>Vertebrata</taxon>
        <taxon>Euteleostomi</taxon>
        <taxon>Mammalia</taxon>
        <taxon>Eutheria</taxon>
        <taxon>Euarchontoglires</taxon>
        <taxon>Glires</taxon>
        <taxon>Rodentia</taxon>
        <taxon>Myomorpha</taxon>
        <taxon>Muroidea</taxon>
        <taxon>Muridae</taxon>
        <taxon>Murinae</taxon>
        <taxon>Mus</taxon>
        <taxon>Mus</taxon>
    </lineage>
</organism>
<gene>
    <name evidence="13" type="primary">Tax1bp3</name>
</gene>
<comment type="function">
    <text evidence="1 4">May regulate a number of protein-protein interactions by competing for PDZ domain binding sites. Binds CTNNB1 and may thereby act as an inhibitor of the Wnt signaling pathway. Competes with LIN7A for KCNJ4 binding, and thereby promotes KCNJ4 internalization. May play a role in the Rho signaling pathway (By similarity).</text>
</comment>
<comment type="subunit">
    <text evidence="2 4 5">Interacts (via its PDZ domain) with GLS2. Interacts (via its PDZ domain) with RTKN (via the C-terminal region); this interaction facilitates Rho-mediated activation of the FOS serum response element (SRE). Interacts (via PDZ domain) with ARHGEF16. Interacts (via PDZ domain) with KCNJ4 (via C-terminus). Competes with LIN7A for KCNJ4 binding (By similarity). Interacts (via its PDZ domain) with CTNNB1; this interaction inhibits the transcriptional activity of CTNNB1. Interacts with ADGRB2 (By similarity).</text>
</comment>
<comment type="interaction">
    <interactant intactId="EBI-1161647">
        <id>Q9DBG9</id>
    </interactant>
    <interactant intactId="EBI-397872">
        <id>Q02248</id>
        <label>Ctnnb1</label>
    </interactant>
    <organismsDiffer>false</organismsDiffer>
    <experiments>6</experiments>
</comment>
<comment type="interaction">
    <interactant intactId="EBI-1161647">
        <id>Q9DBG9</id>
    </interactant>
    <interactant intactId="EBI-491549">
        <id>P35222</id>
        <label>CTNNB1</label>
    </interactant>
    <organismsDiffer>true</organismsDiffer>
    <experiments>3</experiments>
</comment>
<comment type="subcellular location">
    <subcellularLocation>
        <location evidence="4">Cytoplasm</location>
    </subcellularLocation>
    <subcellularLocation>
        <location evidence="4">Nucleus</location>
    </subcellularLocation>
    <subcellularLocation>
        <location evidence="1">Cell membrane</location>
        <topology evidence="1">Peripheral membrane protein</topology>
        <orientation evidence="1">Cytoplasmic side</orientation>
    </subcellularLocation>
    <text evidence="1">Recruited to the cell membrane by interaction with membrane proteins.</text>
</comment>
<feature type="initiator methionine" description="Removed" evidence="2">
    <location>
        <position position="1"/>
    </location>
</feature>
<feature type="chain" id="PRO_0000233944" description="Tax1-binding protein 3">
    <location>
        <begin position="2"/>
        <end position="124"/>
    </location>
</feature>
<feature type="domain" description="PDZ" evidence="3">
    <location>
        <begin position="15"/>
        <end position="112"/>
    </location>
</feature>
<feature type="modified residue" description="N-acetylserine" evidence="2">
    <location>
        <position position="2"/>
    </location>
</feature>
<feature type="modified residue" description="Phosphoserine" evidence="2">
    <location>
        <position position="61"/>
    </location>
</feature>
<feature type="strand" evidence="14">
    <location>
        <begin position="14"/>
        <end position="19"/>
    </location>
</feature>
<feature type="strand" evidence="14">
    <location>
        <begin position="21"/>
        <end position="23"/>
    </location>
</feature>
<feature type="strand" evidence="14">
    <location>
        <begin position="26"/>
        <end position="28"/>
    </location>
</feature>
<feature type="strand" evidence="14">
    <location>
        <begin position="30"/>
        <end position="35"/>
    </location>
</feature>
<feature type="helix" evidence="14">
    <location>
        <begin position="41"/>
        <end position="43"/>
    </location>
</feature>
<feature type="strand" evidence="15">
    <location>
        <begin position="48"/>
        <end position="51"/>
    </location>
</feature>
<feature type="strand" evidence="14">
    <location>
        <begin position="55"/>
        <end position="60"/>
    </location>
</feature>
<feature type="helix" evidence="14">
    <location>
        <begin position="65"/>
        <end position="69"/>
    </location>
</feature>
<feature type="strand" evidence="14">
    <location>
        <begin position="76"/>
        <end position="80"/>
    </location>
</feature>
<feature type="helix" evidence="14">
    <location>
        <begin position="90"/>
        <end position="97"/>
    </location>
</feature>
<feature type="strand" evidence="14">
    <location>
        <begin position="103"/>
        <end position="110"/>
    </location>
</feature>
<feature type="helix" evidence="14">
    <location>
        <begin position="112"/>
        <end position="115"/>
    </location>
</feature>
<feature type="helix" evidence="14">
    <location>
        <begin position="116"/>
        <end position="122"/>
    </location>
</feature>